<sequence length="455" mass="49144">MALWGGRFQGETSALFKLFNDSLPVDYRLFEQDVVGSIAWADAIASVGIITATECSDLKKALNDLLVEVNGDPAIILASGAEDIHSFVESALIAKVGDLGKKLHTGRSRNDQVATDLKLWCQSEGAALLARLQSLHAELLALAEREFDAVMPGYTHLQRAQPVTFGHWCLAYVEMYERDISRLADALTRANTCPLGSGALAGTAYKMDRHALAAALNFASPTLNSLDSVSDRDHVVELCSTASISMMHLSRMAEDLIFFNSGEANFISLSDEVTSGSSLMPQKKNPDALELIRGKTGRVYGSLVGILTTMKALPLAYNKDMQEDKEGLFDVVDSWAICLDMAALVLSGLKVNRPNALLAAQQGYANSTELADYLVSKGMPFREAHHVVGEVVVAAIAKQIPLEEFSLAELKTFAAIIEDDVYPNLTIEACLAKRDVLGGTALPQIQQAIAAKKAR</sequence>
<keyword id="KW-0028">Amino-acid biosynthesis</keyword>
<keyword id="KW-0055">Arginine biosynthesis</keyword>
<keyword id="KW-0963">Cytoplasm</keyword>
<keyword id="KW-0456">Lyase</keyword>
<keyword id="KW-1185">Reference proteome</keyword>
<protein>
    <recommendedName>
        <fullName evidence="1">Argininosuccinate lyase</fullName>
        <shortName evidence="1">ASAL</shortName>
        <ecNumber evidence="1">4.3.2.1</ecNumber>
    </recommendedName>
    <alternativeName>
        <fullName evidence="1">Arginosuccinase</fullName>
    </alternativeName>
</protein>
<organism>
    <name type="scientific">Shewanella baltica (strain OS155 / ATCC BAA-1091)</name>
    <dbReference type="NCBI Taxonomy" id="325240"/>
    <lineage>
        <taxon>Bacteria</taxon>
        <taxon>Pseudomonadati</taxon>
        <taxon>Pseudomonadota</taxon>
        <taxon>Gammaproteobacteria</taxon>
        <taxon>Alteromonadales</taxon>
        <taxon>Shewanellaceae</taxon>
        <taxon>Shewanella</taxon>
    </lineage>
</organism>
<evidence type="ECO:0000255" key="1">
    <source>
        <dbReference type="HAMAP-Rule" id="MF_00006"/>
    </source>
</evidence>
<proteinExistence type="inferred from homology"/>
<comment type="catalytic activity">
    <reaction evidence="1">
        <text>2-(N(omega)-L-arginino)succinate = fumarate + L-arginine</text>
        <dbReference type="Rhea" id="RHEA:24020"/>
        <dbReference type="ChEBI" id="CHEBI:29806"/>
        <dbReference type="ChEBI" id="CHEBI:32682"/>
        <dbReference type="ChEBI" id="CHEBI:57472"/>
        <dbReference type="EC" id="4.3.2.1"/>
    </reaction>
</comment>
<comment type="pathway">
    <text evidence="1">Amino-acid biosynthesis; L-arginine biosynthesis; L-arginine from L-ornithine and carbamoyl phosphate: step 3/3.</text>
</comment>
<comment type="subcellular location">
    <subcellularLocation>
        <location evidence="1">Cytoplasm</location>
    </subcellularLocation>
</comment>
<comment type="similarity">
    <text evidence="1">Belongs to the lyase 1 family. Argininosuccinate lyase subfamily.</text>
</comment>
<feature type="chain" id="PRO_1000000535" description="Argininosuccinate lyase">
    <location>
        <begin position="1"/>
        <end position="455"/>
    </location>
</feature>
<accession>A3DA22</accession>
<gene>
    <name evidence="1" type="primary">argH</name>
    <name type="ordered locus">Sbal_4120</name>
</gene>
<dbReference type="EC" id="4.3.2.1" evidence="1"/>
<dbReference type="EMBL" id="CP000563">
    <property type="protein sequence ID" value="ABN63585.1"/>
    <property type="molecule type" value="Genomic_DNA"/>
</dbReference>
<dbReference type="RefSeq" id="WP_011848137.1">
    <property type="nucleotide sequence ID" value="NC_009052.1"/>
</dbReference>
<dbReference type="SMR" id="A3DA22"/>
<dbReference type="STRING" id="325240.Sbal_4120"/>
<dbReference type="KEGG" id="sbl:Sbal_4120"/>
<dbReference type="HOGENOM" id="CLU_027272_2_3_6"/>
<dbReference type="OrthoDB" id="9769623at2"/>
<dbReference type="UniPathway" id="UPA00068">
    <property type="reaction ID" value="UER00114"/>
</dbReference>
<dbReference type="Proteomes" id="UP000001557">
    <property type="component" value="Chromosome"/>
</dbReference>
<dbReference type="GO" id="GO:0005829">
    <property type="term" value="C:cytosol"/>
    <property type="evidence" value="ECO:0007669"/>
    <property type="project" value="TreeGrafter"/>
</dbReference>
<dbReference type="GO" id="GO:0004056">
    <property type="term" value="F:argininosuccinate lyase activity"/>
    <property type="evidence" value="ECO:0007669"/>
    <property type="project" value="UniProtKB-UniRule"/>
</dbReference>
<dbReference type="GO" id="GO:0042450">
    <property type="term" value="P:arginine biosynthetic process via ornithine"/>
    <property type="evidence" value="ECO:0007669"/>
    <property type="project" value="InterPro"/>
</dbReference>
<dbReference type="GO" id="GO:0006526">
    <property type="term" value="P:L-arginine biosynthetic process"/>
    <property type="evidence" value="ECO:0007669"/>
    <property type="project" value="UniProtKB-UniRule"/>
</dbReference>
<dbReference type="CDD" id="cd01359">
    <property type="entry name" value="Argininosuccinate_lyase"/>
    <property type="match status" value="1"/>
</dbReference>
<dbReference type="FunFam" id="1.10.40.30:FF:000001">
    <property type="entry name" value="Argininosuccinate lyase"/>
    <property type="match status" value="1"/>
</dbReference>
<dbReference type="FunFam" id="1.20.200.10:FF:000006">
    <property type="entry name" value="Argininosuccinate lyase"/>
    <property type="match status" value="1"/>
</dbReference>
<dbReference type="Gene3D" id="1.10.40.30">
    <property type="entry name" value="Fumarase/aspartase (C-terminal domain)"/>
    <property type="match status" value="1"/>
</dbReference>
<dbReference type="Gene3D" id="1.20.200.10">
    <property type="entry name" value="Fumarase/aspartase (Central domain)"/>
    <property type="match status" value="1"/>
</dbReference>
<dbReference type="Gene3D" id="1.10.275.10">
    <property type="entry name" value="Fumarase/aspartase (N-terminal domain)"/>
    <property type="match status" value="1"/>
</dbReference>
<dbReference type="HAMAP" id="MF_00006">
    <property type="entry name" value="Arg_succ_lyase"/>
    <property type="match status" value="1"/>
</dbReference>
<dbReference type="InterPro" id="IPR029419">
    <property type="entry name" value="Arg_succ_lyase_C"/>
</dbReference>
<dbReference type="InterPro" id="IPR009049">
    <property type="entry name" value="Argininosuccinate_lyase"/>
</dbReference>
<dbReference type="InterPro" id="IPR024083">
    <property type="entry name" value="Fumarase/histidase_N"/>
</dbReference>
<dbReference type="InterPro" id="IPR020557">
    <property type="entry name" value="Fumarate_lyase_CS"/>
</dbReference>
<dbReference type="InterPro" id="IPR000362">
    <property type="entry name" value="Fumarate_lyase_fam"/>
</dbReference>
<dbReference type="InterPro" id="IPR022761">
    <property type="entry name" value="Fumarate_lyase_N"/>
</dbReference>
<dbReference type="InterPro" id="IPR008948">
    <property type="entry name" value="L-Aspartase-like"/>
</dbReference>
<dbReference type="NCBIfam" id="TIGR00838">
    <property type="entry name" value="argH"/>
    <property type="match status" value="1"/>
</dbReference>
<dbReference type="NCBIfam" id="NF008964">
    <property type="entry name" value="PRK12308.1"/>
    <property type="match status" value="1"/>
</dbReference>
<dbReference type="PANTHER" id="PTHR43814">
    <property type="entry name" value="ARGININOSUCCINATE LYASE"/>
    <property type="match status" value="1"/>
</dbReference>
<dbReference type="PANTHER" id="PTHR43814:SF1">
    <property type="entry name" value="ARGININOSUCCINATE LYASE"/>
    <property type="match status" value="1"/>
</dbReference>
<dbReference type="Pfam" id="PF14698">
    <property type="entry name" value="ASL_C2"/>
    <property type="match status" value="1"/>
</dbReference>
<dbReference type="Pfam" id="PF00206">
    <property type="entry name" value="Lyase_1"/>
    <property type="match status" value="1"/>
</dbReference>
<dbReference type="PRINTS" id="PR00145">
    <property type="entry name" value="ARGSUCLYASE"/>
</dbReference>
<dbReference type="PRINTS" id="PR00149">
    <property type="entry name" value="FUMRATELYASE"/>
</dbReference>
<dbReference type="SUPFAM" id="SSF48557">
    <property type="entry name" value="L-aspartase-like"/>
    <property type="match status" value="1"/>
</dbReference>
<dbReference type="PROSITE" id="PS00163">
    <property type="entry name" value="FUMARATE_LYASES"/>
    <property type="match status" value="1"/>
</dbReference>
<name>ARLY_SHEB5</name>
<reference key="1">
    <citation type="submission" date="2007-02" db="EMBL/GenBank/DDBJ databases">
        <title>Complete sequence of chromosome of Shewanella baltica OS155.</title>
        <authorList>
            <consortium name="US DOE Joint Genome Institute"/>
            <person name="Copeland A."/>
            <person name="Lucas S."/>
            <person name="Lapidus A."/>
            <person name="Barry K."/>
            <person name="Detter J.C."/>
            <person name="Glavina del Rio T."/>
            <person name="Hammon N."/>
            <person name="Israni S."/>
            <person name="Dalin E."/>
            <person name="Tice H."/>
            <person name="Pitluck S."/>
            <person name="Sims D.R."/>
            <person name="Brettin T."/>
            <person name="Bruce D."/>
            <person name="Han C."/>
            <person name="Tapia R."/>
            <person name="Brainard J."/>
            <person name="Schmutz J."/>
            <person name="Larimer F."/>
            <person name="Land M."/>
            <person name="Hauser L."/>
            <person name="Kyrpides N."/>
            <person name="Mikhailova N."/>
            <person name="Brettar I."/>
            <person name="Klappenbach J."/>
            <person name="Konstantinidis K."/>
            <person name="Rodrigues J."/>
            <person name="Tiedje J."/>
            <person name="Richardson P."/>
        </authorList>
    </citation>
    <scope>NUCLEOTIDE SEQUENCE [LARGE SCALE GENOMIC DNA]</scope>
    <source>
        <strain>OS155 / ATCC BAA-1091</strain>
    </source>
</reference>